<sequence length="413" mass="44414">MTDNRVENSSGRAARKLRLALMGPAFIAAIGYIDPGNFATNIQAGASFGYQLLWVVVWANLMAMLIQILSAKLGIATGKNLAEQIRDHYPRPVVWFYWVQAEIIAMATDLAEFIGAAIGFKLILGVSLLQGAVLTGIATFLILMLQRRGQKPLEKVIGGLLLFVAAAYIVELFFSQPDMAQLGKGMVIPALPNPEAVFLAAGVLGATIMPHVIYLHSSLTQHLHGGTRQQRYSATKWDVAIAMTIAGFVNLAMMATAAAAFHFSGHTGIADLDQAYLTLEPLLSHAAATVFGLSLVAAGLSSTVVGTLAGQVVMQGFVRFHIPLWVRRTITMLPSFIVILMGLDPTRILVMSQVLLSFGIALALVPLLIFTSNATLMGELVNTRRVKQIGWIIVVLVVALNIWLLVGTVMGLS</sequence>
<protein>
    <recommendedName>
        <fullName evidence="1">Divalent metal cation transporter MntH</fullName>
    </recommendedName>
</protein>
<comment type="function">
    <text evidence="1">H(+)-stimulated, divalent metal cation uptake system.</text>
</comment>
<comment type="subcellular location">
    <subcellularLocation>
        <location evidence="1">Cell inner membrane</location>
        <topology evidence="1">Multi-pass membrane protein</topology>
    </subcellularLocation>
</comment>
<comment type="similarity">
    <text evidence="1">Belongs to the NRAMP family.</text>
</comment>
<gene>
    <name evidence="1" type="primary">mntH</name>
    <name type="ordered locus">STY2649</name>
    <name type="ordered locus">t0449</name>
</gene>
<proteinExistence type="inferred from homology"/>
<feature type="chain" id="PRO_0000212632" description="Divalent metal cation transporter MntH">
    <location>
        <begin position="1"/>
        <end position="413"/>
    </location>
</feature>
<feature type="topological domain" description="Cytoplasmic" evidence="1">
    <location>
        <begin position="1"/>
        <end position="19"/>
    </location>
</feature>
<feature type="transmembrane region" description="Helical" evidence="1">
    <location>
        <begin position="20"/>
        <end position="39"/>
    </location>
</feature>
<feature type="topological domain" description="Periplasmic" evidence="1">
    <location>
        <begin position="40"/>
        <end position="51"/>
    </location>
</feature>
<feature type="transmembrane region" description="Helical" evidence="1">
    <location>
        <begin position="52"/>
        <end position="71"/>
    </location>
</feature>
<feature type="topological domain" description="Cytoplasmic" evidence="1">
    <location>
        <begin position="72"/>
        <end position="95"/>
    </location>
</feature>
<feature type="transmembrane region" description="Helical" evidence="1">
    <location>
        <begin position="96"/>
        <end position="118"/>
    </location>
</feature>
<feature type="topological domain" description="Periplasmic" evidence="1">
    <location>
        <begin position="119"/>
        <end position="125"/>
    </location>
</feature>
<feature type="transmembrane region" description="Helical" evidence="1">
    <location>
        <begin position="126"/>
        <end position="145"/>
    </location>
</feature>
<feature type="topological domain" description="Cytoplasmic" evidence="1">
    <location>
        <begin position="146"/>
        <end position="155"/>
    </location>
</feature>
<feature type="transmembrane region" description="Helical" evidence="1">
    <location>
        <begin position="156"/>
        <end position="175"/>
    </location>
</feature>
<feature type="topological domain" description="Periplasmic" evidence="1">
    <location>
        <begin position="176"/>
        <end position="196"/>
    </location>
</feature>
<feature type="transmembrane region" description="Helical" evidence="1">
    <location>
        <begin position="197"/>
        <end position="220"/>
    </location>
</feature>
<feature type="topological domain" description="Cytoplasmic" evidence="1">
    <location>
        <begin position="221"/>
        <end position="238"/>
    </location>
</feature>
<feature type="transmembrane region" description="Helical" evidence="1">
    <location>
        <begin position="239"/>
        <end position="258"/>
    </location>
</feature>
<feature type="topological domain" description="Periplasmic" evidence="1">
    <location>
        <begin position="259"/>
        <end position="276"/>
    </location>
</feature>
<feature type="transmembrane region" description="Helical" evidence="1">
    <location>
        <begin position="277"/>
        <end position="297"/>
    </location>
</feature>
<feature type="topological domain" description="Cytoplasmic" evidence="1">
    <location>
        <begin position="298"/>
        <end position="327"/>
    </location>
</feature>
<feature type="transmembrane region" description="Helical" evidence="1">
    <location>
        <begin position="328"/>
        <end position="344"/>
    </location>
</feature>
<feature type="topological domain" description="Periplasmic" evidence="1">
    <location>
        <begin position="345"/>
        <end position="350"/>
    </location>
</feature>
<feature type="transmembrane region" description="Helical" evidence="1">
    <location>
        <begin position="351"/>
        <end position="370"/>
    </location>
</feature>
<feature type="topological domain" description="Cytoplasmic" evidence="1">
    <location>
        <begin position="371"/>
        <end position="387"/>
    </location>
</feature>
<feature type="transmembrane region" description="Helical" evidence="1">
    <location>
        <begin position="388"/>
        <end position="406"/>
    </location>
</feature>
<feature type="topological domain" description="Periplasmic" evidence="1">
    <location>
        <begin position="407"/>
        <end position="413"/>
    </location>
</feature>
<dbReference type="EMBL" id="AL513382">
    <property type="protein sequence ID" value="CAD07646.1"/>
    <property type="molecule type" value="Genomic_DNA"/>
</dbReference>
<dbReference type="EMBL" id="AE014613">
    <property type="protein sequence ID" value="AAO68161.1"/>
    <property type="molecule type" value="Genomic_DNA"/>
</dbReference>
<dbReference type="RefSeq" id="NP_456951.1">
    <property type="nucleotide sequence ID" value="NC_003198.1"/>
</dbReference>
<dbReference type="RefSeq" id="WP_000131734.1">
    <property type="nucleotide sequence ID" value="NZ_WSUR01000025.1"/>
</dbReference>
<dbReference type="SMR" id="Q8Z4X5"/>
<dbReference type="STRING" id="220341.gene:17586544"/>
<dbReference type="KEGG" id="stt:t0449"/>
<dbReference type="KEGG" id="sty:STY2649"/>
<dbReference type="PATRIC" id="fig|220341.7.peg.2685"/>
<dbReference type="eggNOG" id="COG1914">
    <property type="taxonomic scope" value="Bacteria"/>
</dbReference>
<dbReference type="HOGENOM" id="CLU_020088_2_0_6"/>
<dbReference type="OMA" id="STYLVWT"/>
<dbReference type="OrthoDB" id="9787548at2"/>
<dbReference type="Proteomes" id="UP000000541">
    <property type="component" value="Chromosome"/>
</dbReference>
<dbReference type="Proteomes" id="UP000002670">
    <property type="component" value="Chromosome"/>
</dbReference>
<dbReference type="GO" id="GO:0005886">
    <property type="term" value="C:plasma membrane"/>
    <property type="evidence" value="ECO:0007669"/>
    <property type="project" value="UniProtKB-SubCell"/>
</dbReference>
<dbReference type="GO" id="GO:0015086">
    <property type="term" value="F:cadmium ion transmembrane transporter activity"/>
    <property type="evidence" value="ECO:0007669"/>
    <property type="project" value="TreeGrafter"/>
</dbReference>
<dbReference type="GO" id="GO:0005384">
    <property type="term" value="F:manganese ion transmembrane transporter activity"/>
    <property type="evidence" value="ECO:0007669"/>
    <property type="project" value="TreeGrafter"/>
</dbReference>
<dbReference type="GO" id="GO:0046872">
    <property type="term" value="F:metal ion binding"/>
    <property type="evidence" value="ECO:0007669"/>
    <property type="project" value="UniProtKB-UniRule"/>
</dbReference>
<dbReference type="GO" id="GO:0015293">
    <property type="term" value="F:symporter activity"/>
    <property type="evidence" value="ECO:0007669"/>
    <property type="project" value="UniProtKB-UniRule"/>
</dbReference>
<dbReference type="GO" id="GO:0034755">
    <property type="term" value="P:iron ion transmembrane transport"/>
    <property type="evidence" value="ECO:0007669"/>
    <property type="project" value="TreeGrafter"/>
</dbReference>
<dbReference type="HAMAP" id="MF_00221">
    <property type="entry name" value="NRAMP"/>
    <property type="match status" value="1"/>
</dbReference>
<dbReference type="InterPro" id="IPR001046">
    <property type="entry name" value="NRAMP_fam"/>
</dbReference>
<dbReference type="NCBIfam" id="TIGR01197">
    <property type="entry name" value="nramp"/>
    <property type="match status" value="1"/>
</dbReference>
<dbReference type="NCBIfam" id="NF037982">
    <property type="entry name" value="Nramp_1"/>
    <property type="match status" value="1"/>
</dbReference>
<dbReference type="NCBIfam" id="NF001923">
    <property type="entry name" value="PRK00701.1"/>
    <property type="match status" value="1"/>
</dbReference>
<dbReference type="PANTHER" id="PTHR11706:SF33">
    <property type="entry name" value="NATURAL RESISTANCE-ASSOCIATED MACROPHAGE PROTEIN 2"/>
    <property type="match status" value="1"/>
</dbReference>
<dbReference type="PANTHER" id="PTHR11706">
    <property type="entry name" value="SOLUTE CARRIER PROTEIN FAMILY 11 MEMBER"/>
    <property type="match status" value="1"/>
</dbReference>
<dbReference type="Pfam" id="PF01566">
    <property type="entry name" value="Nramp"/>
    <property type="match status" value="1"/>
</dbReference>
<dbReference type="PRINTS" id="PR00447">
    <property type="entry name" value="NATRESASSCMP"/>
</dbReference>
<name>MNTH_SALTI</name>
<organism>
    <name type="scientific">Salmonella typhi</name>
    <dbReference type="NCBI Taxonomy" id="90370"/>
    <lineage>
        <taxon>Bacteria</taxon>
        <taxon>Pseudomonadati</taxon>
        <taxon>Pseudomonadota</taxon>
        <taxon>Gammaproteobacteria</taxon>
        <taxon>Enterobacterales</taxon>
        <taxon>Enterobacteriaceae</taxon>
        <taxon>Salmonella</taxon>
    </lineage>
</organism>
<keyword id="KW-0997">Cell inner membrane</keyword>
<keyword id="KW-1003">Cell membrane</keyword>
<keyword id="KW-0406">Ion transport</keyword>
<keyword id="KW-0472">Membrane</keyword>
<keyword id="KW-0769">Symport</keyword>
<keyword id="KW-0812">Transmembrane</keyword>
<keyword id="KW-1133">Transmembrane helix</keyword>
<keyword id="KW-0813">Transport</keyword>
<reference key="1">
    <citation type="journal article" date="2001" name="Nature">
        <title>Complete genome sequence of a multiple drug resistant Salmonella enterica serovar Typhi CT18.</title>
        <authorList>
            <person name="Parkhill J."/>
            <person name="Dougan G."/>
            <person name="James K.D."/>
            <person name="Thomson N.R."/>
            <person name="Pickard D."/>
            <person name="Wain J."/>
            <person name="Churcher C.M."/>
            <person name="Mungall K.L."/>
            <person name="Bentley S.D."/>
            <person name="Holden M.T.G."/>
            <person name="Sebaihia M."/>
            <person name="Baker S."/>
            <person name="Basham D."/>
            <person name="Brooks K."/>
            <person name="Chillingworth T."/>
            <person name="Connerton P."/>
            <person name="Cronin A."/>
            <person name="Davis P."/>
            <person name="Davies R.M."/>
            <person name="Dowd L."/>
            <person name="White N."/>
            <person name="Farrar J."/>
            <person name="Feltwell T."/>
            <person name="Hamlin N."/>
            <person name="Haque A."/>
            <person name="Hien T.T."/>
            <person name="Holroyd S."/>
            <person name="Jagels K."/>
            <person name="Krogh A."/>
            <person name="Larsen T.S."/>
            <person name="Leather S."/>
            <person name="Moule S."/>
            <person name="O'Gaora P."/>
            <person name="Parry C."/>
            <person name="Quail M.A."/>
            <person name="Rutherford K.M."/>
            <person name="Simmonds M."/>
            <person name="Skelton J."/>
            <person name="Stevens K."/>
            <person name="Whitehead S."/>
            <person name="Barrell B.G."/>
        </authorList>
    </citation>
    <scope>NUCLEOTIDE SEQUENCE [LARGE SCALE GENOMIC DNA]</scope>
    <source>
        <strain>CT18</strain>
    </source>
</reference>
<reference key="2">
    <citation type="journal article" date="2003" name="J. Bacteriol.">
        <title>Comparative genomics of Salmonella enterica serovar Typhi strains Ty2 and CT18.</title>
        <authorList>
            <person name="Deng W."/>
            <person name="Liou S.-R."/>
            <person name="Plunkett G. III"/>
            <person name="Mayhew G.F."/>
            <person name="Rose D.J."/>
            <person name="Burland V."/>
            <person name="Kodoyianni V."/>
            <person name="Schwartz D.C."/>
            <person name="Blattner F.R."/>
        </authorList>
    </citation>
    <scope>NUCLEOTIDE SEQUENCE [LARGE SCALE GENOMIC DNA]</scope>
    <source>
        <strain>ATCC 700931 / Ty2</strain>
    </source>
</reference>
<accession>Q8Z4X5</accession>
<evidence type="ECO:0000255" key="1">
    <source>
        <dbReference type="HAMAP-Rule" id="MF_00221"/>
    </source>
</evidence>